<reference key="1">
    <citation type="journal article" date="1986" name="J. Mol. Biol.">
        <title>Sequence of the short unique region, short repeats, and part of the long repeats of human cytomegalovirus.</title>
        <authorList>
            <person name="Weston K.M."/>
            <person name="Barrell B.G."/>
        </authorList>
    </citation>
    <scope>NUCLEOTIDE SEQUENCE [GENOMIC DNA]</scope>
</reference>
<reference key="2">
    <citation type="journal article" date="1990" name="Curr. Top. Microbiol. Immunol.">
        <title>Analysis of the protein-coding content of the sequence of human cytomegalovirus strain AD169.</title>
        <authorList>
            <person name="Chee M.S."/>
            <person name="Bankier A.T."/>
            <person name="Beck S."/>
            <person name="Bohni R."/>
            <person name="Brown C.M."/>
            <person name="Cerny R."/>
            <person name="Horsnell T."/>
            <person name="Hutchison C.A. III"/>
            <person name="Kouzarides T."/>
            <person name="Martignetti J.A."/>
            <person name="Preddie E."/>
            <person name="Satchwell S.C."/>
            <person name="Tomlinson P."/>
            <person name="Weston K.M."/>
            <person name="Barrell B.G."/>
        </authorList>
    </citation>
    <scope>NUCLEOTIDE SEQUENCE [LARGE SCALE GENOMIC DNA]</scope>
</reference>
<reference key="3">
    <citation type="journal article" date="2003" name="J. Gen. Virol.">
        <title>The human cytomegalovirus genome revisited: comparison with the chimpanzee cytomegalovirus genome.</title>
        <authorList>
            <person name="Davison A.J."/>
            <person name="Dolan A."/>
            <person name="Akter P."/>
            <person name="Addison C."/>
            <person name="Dargan D.J."/>
            <person name="Alcendor D.J."/>
            <person name="McGeoch D.J."/>
            <person name="Hayward G.S."/>
        </authorList>
    </citation>
    <scope>GENOME REANNOTATION</scope>
    <scope>SEQUENCE REVISION TO N-TERMINUS</scope>
</reference>
<reference key="4">
    <citation type="journal article" date="2003" name="J. Gen. Virol.">
        <authorList>
            <person name="Davison A.J."/>
            <person name="Dolan A."/>
            <person name="Akter P."/>
            <person name="Addison C."/>
            <person name="Dargan D.J."/>
            <person name="Alcendor D.J."/>
            <person name="McGeoch D.J."/>
            <person name="Hayward G.S."/>
        </authorList>
    </citation>
    <scope>ERRATUM OF PUBMED:12533697</scope>
</reference>
<reference key="5">
    <citation type="journal article" date="2004" name="J. Virol.">
        <title>Identification of proteins in human cytomegalovirus (HCMV) particles: the HCMV proteome.</title>
        <authorList>
            <person name="Varnum S.M."/>
            <person name="Streblow D.N."/>
            <person name="Monroe M.E."/>
            <person name="Smith P."/>
            <person name="Auberry K.J."/>
            <person name="Pasa-Tolic L."/>
            <person name="Wang D."/>
            <person name="Camp D.G. II"/>
            <person name="Rodland K."/>
            <person name="Wiley S."/>
            <person name="Britt W."/>
            <person name="Shenk T."/>
            <person name="Smith R.D."/>
            <person name="Nelson J.A."/>
        </authorList>
    </citation>
    <scope>IDENTIFICATION</scope>
</reference>
<reference key="6">
    <citation type="journal article" date="2004" name="J. Virol.">
        <authorList>
            <person name="Varnum S.M."/>
            <person name="Streblow D.N."/>
            <person name="Monroe M.E."/>
            <person name="Smith P."/>
            <person name="Auberry K.J."/>
            <person name="Pasa-Tolic L."/>
            <person name="Wang D."/>
            <person name="Camp D.G. II"/>
            <person name="Rodland K."/>
            <person name="Wiley S."/>
            <person name="Britt W."/>
            <person name="Shenk T."/>
            <person name="Smith R.D."/>
            <person name="Nelson J.A."/>
        </authorList>
    </citation>
    <scope>ERRATUM OF PUBMED:15452216</scope>
</reference>
<gene>
    <name type="primary">US24</name>
</gene>
<keyword id="KW-1185">Reference proteome</keyword>
<keyword id="KW-0946">Virion</keyword>
<keyword id="KW-0920">Virion tegument</keyword>
<organism>
    <name type="scientific">Human cytomegalovirus (strain AD169)</name>
    <name type="common">HHV-5</name>
    <name type="synonym">Human herpesvirus 5</name>
    <dbReference type="NCBI Taxonomy" id="10360"/>
    <lineage>
        <taxon>Viruses</taxon>
        <taxon>Duplodnaviria</taxon>
        <taxon>Heunggongvirae</taxon>
        <taxon>Peploviricota</taxon>
        <taxon>Herviviricetes</taxon>
        <taxon>Herpesvirales</taxon>
        <taxon>Orthoherpesviridae</taxon>
        <taxon>Betaherpesvirinae</taxon>
        <taxon>Cytomegalovirus</taxon>
        <taxon>Cytomegalovirus humanbeta5</taxon>
        <taxon>Human cytomegalovirus</taxon>
    </lineage>
</organism>
<name>US24_HCMVA</name>
<evidence type="ECO:0000305" key="1"/>
<sequence>MMDPAAGSGPDGAAVMPPELPALPVAAEDPMALYRQVLRDFKELFFCLEPMEITRYVHRNEGRCLSLGPPKGWHVMLRTEDGIITAAKQAASKLICCREPLTPLGYAVILLPEPRRDHHDGMVATPYVVFMGRFSRVYAYDTREKYMVLVSHNLDELARYGVSRSEIAYRDVIHTTLRRMTVPVPRRYPKGARTMHVLFLNDTTPEGSYATAERILGCDVKLHTPGYGTVIMRLMKTVQQLHRIWPFCALTEVESRRWWWAVRANLATPWYVLGVTGRPRPGRSFVAEVLVLLDWFGAVYAIQMDDPNHYVRRVANTITEFFRMGLLKMVFRHRRFERERQRQTRMEHRHLCPHHHERAVDHKRDILFNEDAALPDERRERERRILQQQYDWLCLTERFDPHEGAWERLDPNTLVLHRYDTNSQSYVLDPDIVGVEAAEREAAGHQDDTGPRLHCLVTTRSSTREGAERVITALVHQSRLVTYSDPFPLKSLTGVREYIQI</sequence>
<protein>
    <recommendedName>
        <fullName>Tegument protein US24</fullName>
    </recommendedName>
    <alternativeName>
        <fullName>Protein HHLF6</fullName>
    </alternativeName>
</protein>
<comment type="subcellular location">
    <subcellularLocation>
        <location evidence="1">Virion tegument</location>
    </subcellularLocation>
</comment>
<comment type="similarity">
    <text evidence="1">Belongs to the herpesviridae US22 family.</text>
</comment>
<comment type="sequence caution" evidence="1">
    <conflict type="erroneous initiation">
        <sequence resource="EMBL-CDS" id="CAA35291"/>
    </conflict>
</comment>
<comment type="sequence caution" evidence="1">
    <conflict type="erroneous initiation">
        <sequence resource="EMBL-CDS" id="CAB37116"/>
    </conflict>
</comment>
<dbReference type="EMBL" id="X17403">
    <property type="protein sequence ID" value="CAA35291.1"/>
    <property type="status" value="ALT_INIT"/>
    <property type="molecule type" value="Genomic_DNA"/>
</dbReference>
<dbReference type="EMBL" id="X04650">
    <property type="protein sequence ID" value="CAB37116.1"/>
    <property type="status" value="ALT_INIT"/>
    <property type="molecule type" value="Genomic_DNA"/>
</dbReference>
<dbReference type="EMBL" id="BK000394">
    <property type="protein sequence ID" value="DAA00212.1"/>
    <property type="molecule type" value="Genomic_DNA"/>
</dbReference>
<dbReference type="PIR" id="H27231">
    <property type="entry name" value="QQBEG8"/>
</dbReference>
<dbReference type="Proteomes" id="UP000008991">
    <property type="component" value="Segment"/>
</dbReference>
<dbReference type="Proteomes" id="UP000008992">
    <property type="component" value="Segment"/>
</dbReference>
<dbReference type="GO" id="GO:0019033">
    <property type="term" value="C:viral tegument"/>
    <property type="evidence" value="ECO:0007669"/>
    <property type="project" value="UniProtKB-SubCell"/>
</dbReference>
<dbReference type="InterPro" id="IPR003360">
    <property type="entry name" value="US22-like"/>
</dbReference>
<dbReference type="Pfam" id="PF02393">
    <property type="entry name" value="US22"/>
    <property type="match status" value="2"/>
</dbReference>
<proteinExistence type="inferred from homology"/>
<organismHost>
    <name type="scientific">Homo sapiens</name>
    <name type="common">Human</name>
    <dbReference type="NCBI Taxonomy" id="9606"/>
</organismHost>
<feature type="chain" id="PRO_0000115286" description="Tegument protein US24">
    <location>
        <begin position="1"/>
        <end position="501"/>
    </location>
</feature>
<accession>P09700</accession>
<accession>Q7M6H6</accession>